<feature type="chain" id="PRO_0000131859" description="Tribbles homolog 1">
    <location>
        <begin position="1"/>
        <end position="372"/>
    </location>
</feature>
<feature type="domain" description="Protein kinase" evidence="2">
    <location>
        <begin position="91"/>
        <end position="338"/>
    </location>
</feature>
<feature type="region of interest" description="Disordered" evidence="3">
    <location>
        <begin position="1"/>
        <end position="23"/>
    </location>
</feature>
<feature type="region of interest" description="Disordered" evidence="3">
    <location>
        <begin position="52"/>
        <end position="86"/>
    </location>
</feature>
<feature type="short sequence motif" description="COP1-binding" evidence="1">
    <location>
        <begin position="355"/>
        <end position="360"/>
    </location>
</feature>
<feature type="compositionally biased region" description="Pro residues" evidence="3">
    <location>
        <begin position="59"/>
        <end position="75"/>
    </location>
</feature>
<feature type="splice variant" id="VSP_054894" description="In isoform 2." evidence="9">
    <location>
        <begin position="1"/>
        <end position="166"/>
    </location>
</feature>
<feature type="sequence variant" id="VAR_042364" description="In dbSNP:rs56285697." evidence="5">
    <original>S</original>
    <variation>R</variation>
    <location>
        <position position="173"/>
    </location>
</feature>
<feature type="sequence variant" id="VAR_042365" description="In dbSNP:rs34349706." evidence="5">
    <original>T</original>
    <variation>M</variation>
    <location>
        <position position="215"/>
    </location>
</feature>
<feature type="sequence variant" id="VAR_042366" description="In dbSNP:rs56056430." evidence="5">
    <original>V</original>
    <variation>I</variation>
    <location>
        <position position="267"/>
    </location>
</feature>
<feature type="sequence variant" id="VAR_042367" description="In dbSNP:rs55953723." evidence="5">
    <original>R</original>
    <variation>C</variation>
    <location>
        <position position="298"/>
    </location>
</feature>
<feature type="sequence variant" id="VAR_042368" description="In dbSNP:rs35454769." evidence="5">
    <original>E</original>
    <variation>A</variation>
    <location>
        <position position="360"/>
    </location>
</feature>
<feature type="sequence variant" id="VAR_042369" description="In dbSNP:rs16900603." evidence="5">
    <original>E</original>
    <variation>D</variation>
    <location>
        <position position="360"/>
    </location>
</feature>
<feature type="sequence variant" id="VAR_042370" description="In a lung large cell carcinoma sample; somatic mutation." evidence="5">
    <original>F</original>
    <variation>L</variation>
    <location>
        <position position="371"/>
    </location>
</feature>
<feature type="mutagenesis site" description="Decreased interaction with COP1." evidence="8">
    <original>D</original>
    <variation>A</variation>
    <location>
        <position position="355"/>
    </location>
</feature>
<feature type="mutagenesis site" description="Decreased interaction with COP1." evidence="8">
    <original>Q</original>
    <variation>A</variation>
    <location>
        <position position="356"/>
    </location>
</feature>
<feature type="mutagenesis site" description="Decreased interaction with COP1." evidence="8">
    <original>I</original>
    <variation>A</variation>
    <location>
        <position position="357"/>
    </location>
</feature>
<feature type="mutagenesis site" description="Loss of interaction with COP1." evidence="8">
    <original>V</original>
    <variation>I</variation>
    <variation>A</variation>
    <location>
        <position position="358"/>
    </location>
</feature>
<feature type="mutagenesis site" description="Strongly decreased interaction with COP1." evidence="8">
    <original>P</original>
    <variation>A</variation>
    <location>
        <position position="359"/>
    </location>
</feature>
<feature type="mutagenesis site" description="Decreased interaction with COP1." evidence="8">
    <original>E</original>
    <variation>A</variation>
    <location>
        <position position="360"/>
    </location>
</feature>
<feature type="mutagenesis site" description="No effect on interaction with COP1." evidence="8">
    <original>Y</original>
    <variation>A</variation>
    <location>
        <position position="361"/>
    </location>
</feature>
<feature type="sequence conflict" description="In Ref. 9; CAA04119." evidence="10" ref="9">
    <original>VI</original>
    <variation>SV</variation>
    <location>
        <begin position="149"/>
        <end position="150"/>
    </location>
</feature>
<feature type="sequence conflict" description="In Ref. 1 and 9." evidence="10" ref="1 9">
    <original>D</original>
    <variation>S</variation>
    <location>
        <position position="163"/>
    </location>
</feature>
<feature type="strand" evidence="21">
    <location>
        <begin position="89"/>
        <end position="91"/>
    </location>
</feature>
<feature type="strand" evidence="22">
    <location>
        <begin position="94"/>
        <end position="98"/>
    </location>
</feature>
<feature type="strand" evidence="22">
    <location>
        <begin position="103"/>
        <end position="110"/>
    </location>
</feature>
<feature type="turn" evidence="22">
    <location>
        <begin position="111"/>
        <end position="113"/>
    </location>
</feature>
<feature type="strand" evidence="22">
    <location>
        <begin position="116"/>
        <end position="123"/>
    </location>
</feature>
<feature type="helix" evidence="22">
    <location>
        <begin position="124"/>
        <end position="130"/>
    </location>
</feature>
<feature type="helix" evidence="22">
    <location>
        <begin position="132"/>
        <end position="135"/>
    </location>
</feature>
<feature type="strand" evidence="21">
    <location>
        <begin position="137"/>
        <end position="139"/>
    </location>
</feature>
<feature type="turn" evidence="21">
    <location>
        <begin position="141"/>
        <end position="143"/>
    </location>
</feature>
<feature type="strand" evidence="22">
    <location>
        <begin position="146"/>
        <end position="151"/>
    </location>
</feature>
<feature type="strand" evidence="22">
    <location>
        <begin position="153"/>
        <end position="160"/>
    </location>
</feature>
<feature type="helix" evidence="22">
    <location>
        <begin position="167"/>
        <end position="174"/>
    </location>
</feature>
<feature type="helix" evidence="22">
    <location>
        <begin position="179"/>
        <end position="198"/>
    </location>
</feature>
<feature type="helix" evidence="22">
    <location>
        <begin position="208"/>
        <end position="210"/>
    </location>
</feature>
<feature type="strand" evidence="22">
    <location>
        <begin position="211"/>
        <end position="215"/>
    </location>
</feature>
<feature type="strand" evidence="22">
    <location>
        <begin position="221"/>
        <end position="223"/>
    </location>
</feature>
<feature type="strand" evidence="22">
    <location>
        <begin position="240"/>
        <end position="243"/>
    </location>
</feature>
<feature type="helix" evidence="23">
    <location>
        <begin position="246"/>
        <end position="248"/>
    </location>
</feature>
<feature type="helix" evidence="22">
    <location>
        <begin position="251"/>
        <end position="254"/>
    </location>
</feature>
<feature type="helix" evidence="22">
    <location>
        <begin position="262"/>
        <end position="279"/>
    </location>
</feature>
<feature type="helix" evidence="22">
    <location>
        <begin position="289"/>
        <end position="297"/>
    </location>
</feature>
<feature type="strand" evidence="21">
    <location>
        <begin position="305"/>
        <end position="307"/>
    </location>
</feature>
<feature type="helix" evidence="22">
    <location>
        <begin position="309"/>
        <end position="318"/>
    </location>
</feature>
<feature type="helix" evidence="22">
    <location>
        <begin position="323"/>
        <end position="325"/>
    </location>
</feature>
<feature type="helix" evidence="22">
    <location>
        <begin position="329"/>
        <end position="332"/>
    </location>
</feature>
<feature type="helix" evidence="22">
    <location>
        <begin position="336"/>
        <end position="341"/>
    </location>
</feature>
<feature type="strand" evidence="22">
    <location>
        <begin position="360"/>
        <end position="362"/>
    </location>
</feature>
<comment type="function">
    <text evidence="1 4 7 11">Adapter protein involved in protein degradation by interacting with COP1 ubiquitin ligase (PubMed:27041596). The COP1-binding motif is masked by autoinhibitory interactions with the protein kinase domain (PubMed:26455797). Serves to alter COP1 substrate specificity by directing the activity of COP1 toward CEBPA (PubMed:27041596). Binds selectively the recognition sequence of CEBPA (PubMed:26455797). Regulates myeloid cell differentiation by altering the expression of CEBPA in a COP1-dependent manner (By similarity). Controls macrophage, eosinophil and neutrophil differentiation via the COP1-binding domain (By similarity). Interacts with MAPK kinases and regulates activation of MAP kinases, but has no kinase activity (PubMed:15299019, PubMed:26455797).</text>
</comment>
<comment type="subunit">
    <text evidence="6 7 8">Monomer (PubMed:26455797). Interacts (via protein kinase domain) with CEBPA (PubMed:20410507, PubMed:26455797). Interacts with COP1 (PubMed:20410507, PubMed:27041596).</text>
</comment>
<comment type="interaction">
    <interactant intactId="EBI-492555">
        <id>Q96RU8</id>
    </interactant>
    <interactant intactId="EBI-716112">
        <id>Q8N2I9</id>
        <label>STK40</label>
    </interactant>
    <organismsDiffer>false</organismsDiffer>
    <experiments>6</experiments>
</comment>
<comment type="interaction">
    <interactant intactId="EBI-16180744">
        <id>Q96RU8-1</id>
    </interactant>
    <interactant intactId="EBI-16180754">
        <id>P49715-1</id>
        <label>CEBPA</label>
    </interactant>
    <organismsDiffer>false</organismsDiffer>
    <experiments>2</experiments>
</comment>
<comment type="alternative products">
    <event type="alternative splicing"/>
    <isoform>
        <id>Q96RU8-1</id>
        <name>1</name>
        <sequence type="displayed"/>
    </isoform>
    <isoform>
        <id>Q96RU8-2</id>
        <name>2</name>
        <sequence type="described" ref="VSP_054894"/>
    </isoform>
</comment>
<comment type="tissue specificity">
    <text evidence="4">Expressed in most human tissues with the highest levels in skeletal muscle, thyroid gland, pancreas, peripheral blood leukocytes, and bone marrow.</text>
</comment>
<comment type="domain">
    <text evidence="7">The protein kinase active site is incompatible with ATP binding and is inactive (PubMed:26455797).</text>
</comment>
<comment type="domain">
    <text evidence="8">The C-terminus (351-372) is required for interaction with COP1 (PubMed:27041596).</text>
</comment>
<comment type="domain">
    <text evidence="1">The COP1-binding motif (355-360) is required for regulation activity (By similarity).</text>
</comment>
<comment type="similarity">
    <text evidence="10">Belongs to the protein kinase superfamily. CAMK Ser/Thr protein kinase family. Tribbles subfamily.</text>
</comment>
<dbReference type="EMBL" id="AF250310">
    <property type="protein sequence ID" value="AAK58174.1"/>
    <property type="molecule type" value="mRNA"/>
</dbReference>
<dbReference type="EMBL" id="AF205437">
    <property type="protein sequence ID" value="AAG35663.1"/>
    <property type="molecule type" value="mRNA"/>
</dbReference>
<dbReference type="EMBL" id="AK297539">
    <property type="protein sequence ID" value="BAG59938.1"/>
    <property type="molecule type" value="mRNA"/>
</dbReference>
<dbReference type="EMBL" id="AL832388">
    <property type="protein sequence ID" value="CAI46181.1"/>
    <property type="molecule type" value="mRNA"/>
</dbReference>
<dbReference type="EMBL" id="FJ515869">
    <property type="protein sequence ID" value="ACS13752.1"/>
    <property type="molecule type" value="Genomic_DNA"/>
</dbReference>
<dbReference type="EMBL" id="AC091114">
    <property type="status" value="NOT_ANNOTATED_CDS"/>
    <property type="molecule type" value="Genomic_DNA"/>
</dbReference>
<dbReference type="EMBL" id="CH471060">
    <property type="protein sequence ID" value="EAW92085.1"/>
    <property type="molecule type" value="Genomic_DNA"/>
</dbReference>
<dbReference type="EMBL" id="BC063292">
    <property type="protein sequence ID" value="AAH63292.1"/>
    <property type="molecule type" value="mRNA"/>
</dbReference>
<dbReference type="EMBL" id="AJ000480">
    <property type="protein sequence ID" value="CAA04119.1"/>
    <property type="molecule type" value="mRNA"/>
</dbReference>
<dbReference type="CCDS" id="CCDS6357.1">
    <molecule id="Q96RU8-1"/>
</dbReference>
<dbReference type="CCDS" id="CCDS64971.1">
    <molecule id="Q96RU8-2"/>
</dbReference>
<dbReference type="RefSeq" id="NP_001269914.1">
    <molecule id="Q96RU8-2"/>
    <property type="nucleotide sequence ID" value="NM_001282985.2"/>
</dbReference>
<dbReference type="RefSeq" id="NP_079471.1">
    <molecule id="Q96RU8-1"/>
    <property type="nucleotide sequence ID" value="NM_025195.4"/>
</dbReference>
<dbReference type="PDB" id="5CEK">
    <property type="method" value="X-ray"/>
    <property type="resolution" value="2.80 A"/>
    <property type="chains" value="A=83-343"/>
</dbReference>
<dbReference type="PDB" id="5CEM">
    <property type="method" value="X-ray"/>
    <property type="resolution" value="2.10 A"/>
    <property type="chains" value="A=83-371"/>
</dbReference>
<dbReference type="PDB" id="5IGO">
    <property type="method" value="X-ray"/>
    <property type="resolution" value="1.60 A"/>
    <property type="chains" value="U/V/W/X=354-361"/>
</dbReference>
<dbReference type="PDB" id="5IGQ">
    <property type="method" value="X-ray"/>
    <property type="resolution" value="3.90 A"/>
    <property type="chains" value="U=354-364, V/W/X/Y/Z=354-361"/>
</dbReference>
<dbReference type="PDB" id="6DC0">
    <property type="method" value="X-ray"/>
    <property type="resolution" value="2.80 A"/>
    <property type="chains" value="A/B=90-343"/>
</dbReference>
<dbReference type="PDBsum" id="5CEK"/>
<dbReference type="PDBsum" id="5CEM"/>
<dbReference type="PDBsum" id="5IGO"/>
<dbReference type="PDBsum" id="5IGQ"/>
<dbReference type="PDBsum" id="6DC0"/>
<dbReference type="SMR" id="Q96RU8"/>
<dbReference type="BioGRID" id="115516">
    <property type="interactions" value="47"/>
</dbReference>
<dbReference type="DIP" id="DIP-34542N"/>
<dbReference type="FunCoup" id="Q96RU8">
    <property type="interactions" value="2733"/>
</dbReference>
<dbReference type="IntAct" id="Q96RU8">
    <property type="interactions" value="33"/>
</dbReference>
<dbReference type="MINT" id="Q96RU8"/>
<dbReference type="STRING" id="9606.ENSP00000312150"/>
<dbReference type="ChEMBL" id="CHEMBL4524042"/>
<dbReference type="GlyGen" id="Q96RU8">
    <property type="glycosylation" value="1 site, 1 O-linked glycan (1 site)"/>
</dbReference>
<dbReference type="iPTMnet" id="Q96RU8"/>
<dbReference type="PhosphoSitePlus" id="Q96RU8"/>
<dbReference type="BioMuta" id="TRIB1"/>
<dbReference type="DMDM" id="83305929"/>
<dbReference type="jPOST" id="Q96RU8"/>
<dbReference type="MassIVE" id="Q96RU8"/>
<dbReference type="PaxDb" id="9606-ENSP00000312150"/>
<dbReference type="PeptideAtlas" id="Q96RU8"/>
<dbReference type="ProteomicsDB" id="4625"/>
<dbReference type="ProteomicsDB" id="78041">
    <molecule id="Q96RU8-1"/>
</dbReference>
<dbReference type="Pumba" id="Q96RU8"/>
<dbReference type="Antibodypedia" id="27210">
    <property type="antibodies" value="380 antibodies from 31 providers"/>
</dbReference>
<dbReference type="DNASU" id="10221"/>
<dbReference type="Ensembl" id="ENST00000311922.4">
    <molecule id="Q96RU8-1"/>
    <property type="protein sequence ID" value="ENSP00000312150.3"/>
    <property type="gene ID" value="ENSG00000173334.4"/>
</dbReference>
<dbReference type="Ensembl" id="ENST00000520847.1">
    <molecule id="Q96RU8-2"/>
    <property type="protein sequence ID" value="ENSP00000429063.1"/>
    <property type="gene ID" value="ENSG00000173334.4"/>
</dbReference>
<dbReference type="GeneID" id="10221"/>
<dbReference type="KEGG" id="hsa:10221"/>
<dbReference type="MANE-Select" id="ENST00000311922.4">
    <property type="protein sequence ID" value="ENSP00000312150.3"/>
    <property type="RefSeq nucleotide sequence ID" value="NM_025195.4"/>
    <property type="RefSeq protein sequence ID" value="NP_079471.1"/>
</dbReference>
<dbReference type="UCSC" id="uc003yrx.4">
    <molecule id="Q96RU8-1"/>
    <property type="organism name" value="human"/>
</dbReference>
<dbReference type="AGR" id="HGNC:16891"/>
<dbReference type="CTD" id="10221"/>
<dbReference type="DisGeNET" id="10221"/>
<dbReference type="GeneCards" id="TRIB1"/>
<dbReference type="HGNC" id="HGNC:16891">
    <property type="gene designation" value="TRIB1"/>
</dbReference>
<dbReference type="HPA" id="ENSG00000173334">
    <property type="expression patterns" value="Tissue enhanced (bone)"/>
</dbReference>
<dbReference type="MalaCards" id="TRIB1"/>
<dbReference type="MIM" id="609461">
    <property type="type" value="gene"/>
</dbReference>
<dbReference type="neXtProt" id="NX_Q96RU8"/>
<dbReference type="OpenTargets" id="ENSG00000173334"/>
<dbReference type="PharmGKB" id="PA134963922"/>
<dbReference type="VEuPathDB" id="HostDB:ENSG00000173334"/>
<dbReference type="eggNOG" id="KOG0583">
    <property type="taxonomic scope" value="Eukaryota"/>
</dbReference>
<dbReference type="GeneTree" id="ENSGT00950000182986"/>
<dbReference type="HOGENOM" id="CLU_000288_13_1_1"/>
<dbReference type="InParanoid" id="Q96RU8"/>
<dbReference type="OMA" id="GPPDCLS"/>
<dbReference type="OrthoDB" id="410920at2759"/>
<dbReference type="PAN-GO" id="Q96RU8">
    <property type="GO annotations" value="4 GO annotations based on evolutionary models"/>
</dbReference>
<dbReference type="PhylomeDB" id="Q96RU8"/>
<dbReference type="TreeFam" id="TF329785"/>
<dbReference type="PathwayCommons" id="Q96RU8"/>
<dbReference type="Reactome" id="R-HSA-9031628">
    <property type="pathway name" value="NGF-stimulated transcription"/>
</dbReference>
<dbReference type="SignaLink" id="Q96RU8"/>
<dbReference type="BioGRID-ORCS" id="10221">
    <property type="hits" value="36 hits in 1196 CRISPR screens"/>
</dbReference>
<dbReference type="ChiTaRS" id="TRIB1">
    <property type="organism name" value="human"/>
</dbReference>
<dbReference type="EvolutionaryTrace" id="Q96RU8"/>
<dbReference type="GeneWiki" id="TRIB1"/>
<dbReference type="GenomeRNAi" id="10221"/>
<dbReference type="Pharos" id="Q96RU8">
    <property type="development level" value="Tbio"/>
</dbReference>
<dbReference type="PRO" id="PR:Q96RU8"/>
<dbReference type="Proteomes" id="UP000005640">
    <property type="component" value="Chromosome 8"/>
</dbReference>
<dbReference type="RNAct" id="Q96RU8">
    <property type="molecule type" value="protein"/>
</dbReference>
<dbReference type="Bgee" id="ENSG00000173334">
    <property type="expression patterns" value="Expressed in mucosa of urinary bladder and 198 other cell types or tissues"/>
</dbReference>
<dbReference type="ExpressionAtlas" id="Q96RU8">
    <property type="expression patterns" value="baseline and differential"/>
</dbReference>
<dbReference type="GO" id="GO:0005737">
    <property type="term" value="C:cytoplasm"/>
    <property type="evidence" value="ECO:0000314"/>
    <property type="project" value="BHF-UCL"/>
</dbReference>
<dbReference type="GO" id="GO:0005829">
    <property type="term" value="C:cytosol"/>
    <property type="evidence" value="ECO:0000304"/>
    <property type="project" value="Reactome"/>
</dbReference>
<dbReference type="GO" id="GO:0005634">
    <property type="term" value="C:nucleus"/>
    <property type="evidence" value="ECO:0000314"/>
    <property type="project" value="BHF-UCL"/>
</dbReference>
<dbReference type="GO" id="GO:0031434">
    <property type="term" value="F:mitogen-activated protein kinase kinase binding"/>
    <property type="evidence" value="ECO:0000314"/>
    <property type="project" value="BHF-UCL"/>
</dbReference>
<dbReference type="GO" id="GO:0019901">
    <property type="term" value="F:protein kinase binding"/>
    <property type="evidence" value="ECO:0000353"/>
    <property type="project" value="BHF-UCL"/>
</dbReference>
<dbReference type="GO" id="GO:0004860">
    <property type="term" value="F:protein kinase inhibitor activity"/>
    <property type="evidence" value="ECO:0000315"/>
    <property type="project" value="BHF-UCL"/>
</dbReference>
<dbReference type="GO" id="GO:0061629">
    <property type="term" value="F:RNA polymerase II-specific DNA-binding transcription factor binding"/>
    <property type="evidence" value="ECO:0000353"/>
    <property type="project" value="BHF-UCL"/>
</dbReference>
<dbReference type="GO" id="GO:0140416">
    <property type="term" value="F:transcription regulator inhibitor activity"/>
    <property type="evidence" value="ECO:0000314"/>
    <property type="project" value="BHF-UCL"/>
</dbReference>
<dbReference type="GO" id="GO:0031625">
    <property type="term" value="F:ubiquitin protein ligase binding"/>
    <property type="evidence" value="ECO:0000250"/>
    <property type="project" value="BHF-UCL"/>
</dbReference>
<dbReference type="GO" id="GO:0055106">
    <property type="term" value="F:ubiquitin-protein transferase regulator activity"/>
    <property type="evidence" value="ECO:0000250"/>
    <property type="project" value="BHF-UCL"/>
</dbReference>
<dbReference type="GO" id="GO:0046329">
    <property type="term" value="P:negative regulation of JNK cascade"/>
    <property type="evidence" value="ECO:0000315"/>
    <property type="project" value="BHF-UCL"/>
</dbReference>
<dbReference type="GO" id="GO:0031665">
    <property type="term" value="P:negative regulation of lipopolysaccharide-mediated signaling pathway"/>
    <property type="evidence" value="ECO:0000315"/>
    <property type="project" value="BHF-UCL"/>
</dbReference>
<dbReference type="GO" id="GO:0043409">
    <property type="term" value="P:negative regulation of MAPK cascade"/>
    <property type="evidence" value="ECO:0000315"/>
    <property type="project" value="BHF-UCL"/>
</dbReference>
<dbReference type="GO" id="GO:0045659">
    <property type="term" value="P:negative regulation of neutrophil differentiation"/>
    <property type="evidence" value="ECO:0007669"/>
    <property type="project" value="Ensembl"/>
</dbReference>
<dbReference type="GO" id="GO:0014912">
    <property type="term" value="P:negative regulation of smooth muscle cell migration"/>
    <property type="evidence" value="ECO:0000315"/>
    <property type="project" value="BHF-UCL"/>
</dbReference>
<dbReference type="GO" id="GO:0048662">
    <property type="term" value="P:negative regulation of smooth muscle cell proliferation"/>
    <property type="evidence" value="ECO:0000315"/>
    <property type="project" value="BHF-UCL"/>
</dbReference>
<dbReference type="GO" id="GO:0000122">
    <property type="term" value="P:negative regulation of transcription by RNA polymerase II"/>
    <property type="evidence" value="ECO:0000250"/>
    <property type="project" value="BHF-UCL"/>
</dbReference>
<dbReference type="GO" id="GO:0045645">
    <property type="term" value="P:positive regulation of eosinophil differentiation"/>
    <property type="evidence" value="ECO:0007669"/>
    <property type="project" value="Ensembl"/>
</dbReference>
<dbReference type="GO" id="GO:0045651">
    <property type="term" value="P:positive regulation of macrophage differentiation"/>
    <property type="evidence" value="ECO:0007669"/>
    <property type="project" value="Ensembl"/>
</dbReference>
<dbReference type="GO" id="GO:0032436">
    <property type="term" value="P:positive regulation of proteasomal ubiquitin-dependent protein catabolic process"/>
    <property type="evidence" value="ECO:0000250"/>
    <property type="project" value="BHF-UCL"/>
</dbReference>
<dbReference type="GO" id="GO:0043405">
    <property type="term" value="P:regulation of MAP kinase activity"/>
    <property type="evidence" value="ECO:0000314"/>
    <property type="project" value="UniProtKB"/>
</dbReference>
<dbReference type="GO" id="GO:0032496">
    <property type="term" value="P:response to lipopolysaccharide"/>
    <property type="evidence" value="ECO:0000315"/>
    <property type="project" value="BHF-UCL"/>
</dbReference>
<dbReference type="CDD" id="cd14023">
    <property type="entry name" value="PK_TRB1"/>
    <property type="match status" value="1"/>
</dbReference>
<dbReference type="FunFam" id="3.30.200.20:FF:000381">
    <property type="entry name" value="tribbles homolog 1"/>
    <property type="match status" value="1"/>
</dbReference>
<dbReference type="FunFam" id="1.10.510.10:FF:000153">
    <property type="entry name" value="Tribbles homolog 2"/>
    <property type="match status" value="1"/>
</dbReference>
<dbReference type="Gene3D" id="3.30.200.20">
    <property type="entry name" value="Phosphorylase Kinase, domain 1"/>
    <property type="match status" value="1"/>
</dbReference>
<dbReference type="Gene3D" id="1.10.510.10">
    <property type="entry name" value="Transferase(Phosphotransferase) domain 1"/>
    <property type="match status" value="1"/>
</dbReference>
<dbReference type="InterPro" id="IPR011009">
    <property type="entry name" value="Kinase-like_dom_sf"/>
</dbReference>
<dbReference type="InterPro" id="IPR000719">
    <property type="entry name" value="Prot_kinase_dom"/>
</dbReference>
<dbReference type="InterPro" id="IPR024105">
    <property type="entry name" value="TRB1_pseudokinase_dom"/>
</dbReference>
<dbReference type="InterPro" id="IPR024104">
    <property type="entry name" value="Tribbles/Ser_Thr_kinase_40"/>
</dbReference>
<dbReference type="PANTHER" id="PTHR22961">
    <property type="entry name" value="SER/THR PROTEIN KINASE-TRB"/>
    <property type="match status" value="1"/>
</dbReference>
<dbReference type="PANTHER" id="PTHR22961:SF17">
    <property type="entry name" value="TRIBBLES HOMOLOG 1"/>
    <property type="match status" value="1"/>
</dbReference>
<dbReference type="Pfam" id="PF00069">
    <property type="entry name" value="Pkinase"/>
    <property type="match status" value="1"/>
</dbReference>
<dbReference type="SMART" id="SM00220">
    <property type="entry name" value="S_TKc"/>
    <property type="match status" value="1"/>
</dbReference>
<dbReference type="SUPFAM" id="SSF56112">
    <property type="entry name" value="Protein kinase-like (PK-like)"/>
    <property type="match status" value="1"/>
</dbReference>
<dbReference type="PROSITE" id="PS50011">
    <property type="entry name" value="PROTEIN_KINASE_DOM"/>
    <property type="match status" value="1"/>
</dbReference>
<keyword id="KW-0002">3D-structure</keyword>
<keyword id="KW-0025">Alternative splicing</keyword>
<keyword id="KW-0649">Protein kinase inhibitor</keyword>
<keyword id="KW-1267">Proteomics identification</keyword>
<keyword id="KW-1185">Reference proteome</keyword>
<reference evidence="10 14" key="1">
    <citation type="journal article" date="2004" name="J. Biol. Chem.">
        <title>Human tribbles, a protein family controlling mitogen-activated protein kinase cascades.</title>
        <authorList>
            <person name="Kiss-Toth E."/>
            <person name="Bagstaff S.M."/>
            <person name="Sung H.Y."/>
            <person name="Jozsa V."/>
            <person name="Dempsey C."/>
            <person name="Caunt J.C."/>
            <person name="Oxley K.M."/>
            <person name="Wyllie D.H."/>
            <person name="Polgar T."/>
            <person name="Harte M."/>
            <person name="O'Neill L.A.J."/>
            <person name="Qwarnstrom E.E."/>
            <person name="Dower S.K."/>
        </authorList>
    </citation>
    <scope>NUCLEOTIDE SEQUENCE [MRNA] (ISOFORM 1)</scope>
    <scope>FUNCTION</scope>
    <scope>TISSUE SPECIFICITY</scope>
    <scope>INTERACTION WITH MAP2K1 AND MAP2K4</scope>
</reference>
<reference evidence="12" key="2">
    <citation type="submission" date="1999-11" db="EMBL/GenBank/DDBJ databases">
        <title>Identification of a novel nuclear factor Gig2, as an m1-acetylcholine receptor-induced gene.</title>
        <authorList>
            <person name="Mayhaus M."/>
            <person name="von der Kammer H."/>
            <person name="Klaudiny J."/>
            <person name="Albrecht C."/>
            <person name="Hoffmann B."/>
            <person name="Nitsch R.M."/>
        </authorList>
    </citation>
    <scope>NUCLEOTIDE SEQUENCE [MRNA] (ISOFORM 1)</scope>
    <source>
        <tissue>Kidney</tissue>
    </source>
</reference>
<reference key="3">
    <citation type="journal article" date="2004" name="Nat. Genet.">
        <title>Complete sequencing and characterization of 21,243 full-length human cDNAs.</title>
        <authorList>
            <person name="Ota T."/>
            <person name="Suzuki Y."/>
            <person name="Nishikawa T."/>
            <person name="Otsuki T."/>
            <person name="Sugiyama T."/>
            <person name="Irie R."/>
            <person name="Wakamatsu A."/>
            <person name="Hayashi K."/>
            <person name="Sato H."/>
            <person name="Nagai K."/>
            <person name="Kimura K."/>
            <person name="Makita H."/>
            <person name="Sekine M."/>
            <person name="Obayashi M."/>
            <person name="Nishi T."/>
            <person name="Shibahara T."/>
            <person name="Tanaka T."/>
            <person name="Ishii S."/>
            <person name="Yamamoto J."/>
            <person name="Saito K."/>
            <person name="Kawai Y."/>
            <person name="Isono Y."/>
            <person name="Nakamura Y."/>
            <person name="Nagahari K."/>
            <person name="Murakami K."/>
            <person name="Yasuda T."/>
            <person name="Iwayanagi T."/>
            <person name="Wagatsuma M."/>
            <person name="Shiratori A."/>
            <person name="Sudo H."/>
            <person name="Hosoiri T."/>
            <person name="Kaku Y."/>
            <person name="Kodaira H."/>
            <person name="Kondo H."/>
            <person name="Sugawara M."/>
            <person name="Takahashi M."/>
            <person name="Kanda K."/>
            <person name="Yokoi T."/>
            <person name="Furuya T."/>
            <person name="Kikkawa E."/>
            <person name="Omura Y."/>
            <person name="Abe K."/>
            <person name="Kamihara K."/>
            <person name="Katsuta N."/>
            <person name="Sato K."/>
            <person name="Tanikawa M."/>
            <person name="Yamazaki M."/>
            <person name="Ninomiya K."/>
            <person name="Ishibashi T."/>
            <person name="Yamashita H."/>
            <person name="Murakawa K."/>
            <person name="Fujimori K."/>
            <person name="Tanai H."/>
            <person name="Kimata M."/>
            <person name="Watanabe M."/>
            <person name="Hiraoka S."/>
            <person name="Chiba Y."/>
            <person name="Ishida S."/>
            <person name="Ono Y."/>
            <person name="Takiguchi S."/>
            <person name="Watanabe S."/>
            <person name="Yosida M."/>
            <person name="Hotuta T."/>
            <person name="Kusano J."/>
            <person name="Kanehori K."/>
            <person name="Takahashi-Fujii A."/>
            <person name="Hara H."/>
            <person name="Tanase T.-O."/>
            <person name="Nomura Y."/>
            <person name="Togiya S."/>
            <person name="Komai F."/>
            <person name="Hara R."/>
            <person name="Takeuchi K."/>
            <person name="Arita M."/>
            <person name="Imose N."/>
            <person name="Musashino K."/>
            <person name="Yuuki H."/>
            <person name="Oshima A."/>
            <person name="Sasaki N."/>
            <person name="Aotsuka S."/>
            <person name="Yoshikawa Y."/>
            <person name="Matsunawa H."/>
            <person name="Ichihara T."/>
            <person name="Shiohata N."/>
            <person name="Sano S."/>
            <person name="Moriya S."/>
            <person name="Momiyama H."/>
            <person name="Satoh N."/>
            <person name="Takami S."/>
            <person name="Terashima Y."/>
            <person name="Suzuki O."/>
            <person name="Nakagawa S."/>
            <person name="Senoh A."/>
            <person name="Mizoguchi H."/>
            <person name="Goto Y."/>
            <person name="Shimizu F."/>
            <person name="Wakebe H."/>
            <person name="Hishigaki H."/>
            <person name="Watanabe T."/>
            <person name="Sugiyama A."/>
            <person name="Takemoto M."/>
            <person name="Kawakami B."/>
            <person name="Yamazaki M."/>
            <person name="Watanabe K."/>
            <person name="Kumagai A."/>
            <person name="Itakura S."/>
            <person name="Fukuzumi Y."/>
            <person name="Fujimori Y."/>
            <person name="Komiyama M."/>
            <person name="Tashiro H."/>
            <person name="Tanigami A."/>
            <person name="Fujiwara T."/>
            <person name="Ono T."/>
            <person name="Yamada K."/>
            <person name="Fujii Y."/>
            <person name="Ozaki K."/>
            <person name="Hirao M."/>
            <person name="Ohmori Y."/>
            <person name="Kawabata A."/>
            <person name="Hikiji T."/>
            <person name="Kobatake N."/>
            <person name="Inagaki H."/>
            <person name="Ikema Y."/>
            <person name="Okamoto S."/>
            <person name="Okitani R."/>
            <person name="Kawakami T."/>
            <person name="Noguchi S."/>
            <person name="Itoh T."/>
            <person name="Shigeta K."/>
            <person name="Senba T."/>
            <person name="Matsumura K."/>
            <person name="Nakajima Y."/>
            <person name="Mizuno T."/>
            <person name="Morinaga M."/>
            <person name="Sasaki M."/>
            <person name="Togashi T."/>
            <person name="Oyama M."/>
            <person name="Hata H."/>
            <person name="Watanabe M."/>
            <person name="Komatsu T."/>
            <person name="Mizushima-Sugano J."/>
            <person name="Satoh T."/>
            <person name="Shirai Y."/>
            <person name="Takahashi Y."/>
            <person name="Nakagawa K."/>
            <person name="Okumura K."/>
            <person name="Nagase T."/>
            <person name="Nomura N."/>
            <person name="Kikuchi H."/>
            <person name="Masuho Y."/>
            <person name="Yamashita R."/>
            <person name="Nakai K."/>
            <person name="Yada T."/>
            <person name="Nakamura Y."/>
            <person name="Ohara O."/>
            <person name="Isogai T."/>
            <person name="Sugano S."/>
        </authorList>
    </citation>
    <scope>NUCLEOTIDE SEQUENCE [LARGE SCALE MRNA] (ISOFORM 2)</scope>
    <source>
        <tissue>Brain</tissue>
    </source>
</reference>
<reference key="4">
    <citation type="journal article" date="2007" name="BMC Genomics">
        <title>The full-ORF clone resource of the German cDNA consortium.</title>
        <authorList>
            <person name="Bechtel S."/>
            <person name="Rosenfelder H."/>
            <person name="Duda A."/>
            <person name="Schmidt C.P."/>
            <person name="Ernst U."/>
            <person name="Wellenreuther R."/>
            <person name="Mehrle A."/>
            <person name="Schuster C."/>
            <person name="Bahr A."/>
            <person name="Bloecker H."/>
            <person name="Heubner D."/>
            <person name="Hoerlein A."/>
            <person name="Michel G."/>
            <person name="Wedler H."/>
            <person name="Koehrer K."/>
            <person name="Ottenwaelder B."/>
            <person name="Poustka A."/>
            <person name="Wiemann S."/>
            <person name="Schupp I."/>
        </authorList>
    </citation>
    <scope>NUCLEOTIDE SEQUENCE [LARGE SCALE MRNA] (ISOFORM 1)</scope>
    <source>
        <tissue>Lymph node</tissue>
    </source>
</reference>
<reference evidence="12" key="5">
    <citation type="submission" date="2008-12" db="EMBL/GenBank/DDBJ databases">
        <authorList>
            <consortium name="NHLBI resequencing and genotyping service (RS&amp;G)"/>
        </authorList>
    </citation>
    <scope>NUCLEOTIDE SEQUENCE [GENOMIC DNA]</scope>
</reference>
<reference key="6">
    <citation type="journal article" date="2006" name="Nature">
        <title>DNA sequence and analysis of human chromosome 8.</title>
        <authorList>
            <person name="Nusbaum C."/>
            <person name="Mikkelsen T.S."/>
            <person name="Zody M.C."/>
            <person name="Asakawa S."/>
            <person name="Taudien S."/>
            <person name="Garber M."/>
            <person name="Kodira C.D."/>
            <person name="Schueler M.G."/>
            <person name="Shimizu A."/>
            <person name="Whittaker C.A."/>
            <person name="Chang J.L."/>
            <person name="Cuomo C.A."/>
            <person name="Dewar K."/>
            <person name="FitzGerald M.G."/>
            <person name="Yang X."/>
            <person name="Allen N.R."/>
            <person name="Anderson S."/>
            <person name="Asakawa T."/>
            <person name="Blechschmidt K."/>
            <person name="Bloom T."/>
            <person name="Borowsky M.L."/>
            <person name="Butler J."/>
            <person name="Cook A."/>
            <person name="Corum B."/>
            <person name="DeArellano K."/>
            <person name="DeCaprio D."/>
            <person name="Dooley K.T."/>
            <person name="Dorris L. III"/>
            <person name="Engels R."/>
            <person name="Gloeckner G."/>
            <person name="Hafez N."/>
            <person name="Hagopian D.S."/>
            <person name="Hall J.L."/>
            <person name="Ishikawa S.K."/>
            <person name="Jaffe D.B."/>
            <person name="Kamat A."/>
            <person name="Kudoh J."/>
            <person name="Lehmann R."/>
            <person name="Lokitsang T."/>
            <person name="Macdonald P."/>
            <person name="Major J.E."/>
            <person name="Matthews C.D."/>
            <person name="Mauceli E."/>
            <person name="Menzel U."/>
            <person name="Mihalev A.H."/>
            <person name="Minoshima S."/>
            <person name="Murayama Y."/>
            <person name="Naylor J.W."/>
            <person name="Nicol R."/>
            <person name="Nguyen C."/>
            <person name="O'Leary S.B."/>
            <person name="O'Neill K."/>
            <person name="Parker S.C.J."/>
            <person name="Polley A."/>
            <person name="Raymond C.K."/>
            <person name="Reichwald K."/>
            <person name="Rodriguez J."/>
            <person name="Sasaki T."/>
            <person name="Schilhabel M."/>
            <person name="Siddiqui R."/>
            <person name="Smith C.L."/>
            <person name="Sneddon T.P."/>
            <person name="Talamas J.A."/>
            <person name="Tenzin P."/>
            <person name="Topham K."/>
            <person name="Venkataraman V."/>
            <person name="Wen G."/>
            <person name="Yamazaki S."/>
            <person name="Young S.K."/>
            <person name="Zeng Q."/>
            <person name="Zimmer A.R."/>
            <person name="Rosenthal A."/>
            <person name="Birren B.W."/>
            <person name="Platzer M."/>
            <person name="Shimizu N."/>
            <person name="Lander E.S."/>
        </authorList>
    </citation>
    <scope>NUCLEOTIDE SEQUENCE [LARGE SCALE GENOMIC DNA]</scope>
</reference>
<reference evidence="12" key="7">
    <citation type="submission" date="2005-07" db="EMBL/GenBank/DDBJ databases">
        <authorList>
            <person name="Mural R.J."/>
            <person name="Istrail S."/>
            <person name="Sutton G.G."/>
            <person name="Florea L."/>
            <person name="Halpern A.L."/>
            <person name="Mobarry C.M."/>
            <person name="Lippert R."/>
            <person name="Walenz B."/>
            <person name="Shatkay H."/>
            <person name="Dew I."/>
            <person name="Miller J.R."/>
            <person name="Flanigan M.J."/>
            <person name="Edwards N.J."/>
            <person name="Bolanos R."/>
            <person name="Fasulo D."/>
            <person name="Halldorsson B.V."/>
            <person name="Hannenhalli S."/>
            <person name="Turner R."/>
            <person name="Yooseph S."/>
            <person name="Lu F."/>
            <person name="Nusskern D.R."/>
            <person name="Shue B.C."/>
            <person name="Zheng X.H."/>
            <person name="Zhong F."/>
            <person name="Delcher A.L."/>
            <person name="Huson D.H."/>
            <person name="Kravitz S.A."/>
            <person name="Mouchard L."/>
            <person name="Reinert K."/>
            <person name="Remington K.A."/>
            <person name="Clark A.G."/>
            <person name="Waterman M.S."/>
            <person name="Eichler E.E."/>
            <person name="Adams M.D."/>
            <person name="Hunkapiller M.W."/>
            <person name="Myers E.W."/>
            <person name="Venter J.C."/>
        </authorList>
    </citation>
    <scope>NUCLEOTIDE SEQUENCE [LARGE SCALE GENOMIC DNA]</scope>
</reference>
<reference evidence="13" key="8">
    <citation type="journal article" date="2004" name="Genome Res.">
        <title>The status, quality, and expansion of the NIH full-length cDNA project: the Mammalian Gene Collection (MGC).</title>
        <authorList>
            <consortium name="The MGC Project Team"/>
        </authorList>
    </citation>
    <scope>NUCLEOTIDE SEQUENCE [LARGE SCALE MRNA] (ISOFORM 1)</scope>
    <source>
        <tissue evidence="13">Placenta</tissue>
    </source>
</reference>
<reference evidence="10 15" key="9">
    <citation type="journal article" date="1997" name="Eur. J. Biochem.">
        <title>Characterization of a phosphoprotein whose mRNA is regulated by the mitogenic pathways in dog thyroid cells.</title>
        <authorList>
            <person name="Wilkin F."/>
            <person name="Suarez-Huerta N."/>
            <person name="Robaye B."/>
            <person name="Peetermans J."/>
            <person name="Libert F."/>
            <person name="Dumont J.E."/>
            <person name="Maenhaut C."/>
        </authorList>
    </citation>
    <scope>NUCLEOTIDE SEQUENCE [MRNA] OF 149-372 (ISOFORM 1)</scope>
    <source>
        <tissue evidence="15">Thyroid</tissue>
    </source>
</reference>
<reference key="10">
    <citation type="journal article" date="2010" name="Blood">
        <title>Differential ability of Tribbles family members to promote degradation of C/EBPalpha and induce acute myelogenous leukemia.</title>
        <authorList>
            <person name="Dedhia P.H."/>
            <person name="Keeshan K."/>
            <person name="Uljon S."/>
            <person name="Xu L."/>
            <person name="Vega M.E."/>
            <person name="Shestova O."/>
            <person name="Zaks-Zilberman M."/>
            <person name="Romany C."/>
            <person name="Blacklow S.C."/>
            <person name="Pear W.S."/>
        </authorList>
    </citation>
    <scope>INTERACTION WITH CEBPA AND COP1</scope>
</reference>
<reference evidence="17 18" key="11">
    <citation type="journal article" date="2015" name="Structure">
        <title>Molecular mechanism of CCAAT-enhancer binding protein recruitment by the TRIB1 pseudokinase.</title>
        <authorList>
            <person name="Murphy J.M."/>
            <person name="Nakatani Y."/>
            <person name="Jamieson S.A."/>
            <person name="Dai W."/>
            <person name="Lucet I.S."/>
            <person name="Mace P.D."/>
        </authorList>
    </citation>
    <scope>X-RAY CRYSTALLOGRAPHY (2.10 ANGSTROMS) OF 83-371</scope>
    <scope>FUNCTION</scope>
    <scope>INTERACTION WITH CEBPA</scope>
    <scope>SUBUNIT</scope>
</reference>
<reference evidence="19 20" key="12">
    <citation type="journal article" date="2016" name="Structure">
        <title>Structural basis for substrate selectivity of the E3 ligase COP1.</title>
        <authorList>
            <person name="Uljon S."/>
            <person name="Xu X."/>
            <person name="Durzynska I."/>
            <person name="Stein S."/>
            <person name="Adelmant G."/>
            <person name="Marto J.A."/>
            <person name="Pear W.S."/>
            <person name="Blacklow S.C."/>
        </authorList>
    </citation>
    <scope>X-RAY CRYSTALLOGRAPHY (1.60 ANGSTROMS) OF 354-361</scope>
    <scope>INTERACTION WITH COP1</scope>
    <scope>DOMAIN</scope>
    <scope>MUTAGENESIS OF ASP-355; GLN-356; ILE-357; VAL-358; PRO-359; GLU-360 AND TYR-361</scope>
</reference>
<reference key="13">
    <citation type="journal article" date="2007" name="Nature">
        <title>Patterns of somatic mutation in human cancer genomes.</title>
        <authorList>
            <person name="Greenman C."/>
            <person name="Stephens P."/>
            <person name="Smith R."/>
            <person name="Dalgliesh G.L."/>
            <person name="Hunter C."/>
            <person name="Bignell G."/>
            <person name="Davies H."/>
            <person name="Teague J."/>
            <person name="Butler A."/>
            <person name="Stevens C."/>
            <person name="Edkins S."/>
            <person name="O'Meara S."/>
            <person name="Vastrik I."/>
            <person name="Schmidt E.E."/>
            <person name="Avis T."/>
            <person name="Barthorpe S."/>
            <person name="Bhamra G."/>
            <person name="Buck G."/>
            <person name="Choudhury B."/>
            <person name="Clements J."/>
            <person name="Cole J."/>
            <person name="Dicks E."/>
            <person name="Forbes S."/>
            <person name="Gray K."/>
            <person name="Halliday K."/>
            <person name="Harrison R."/>
            <person name="Hills K."/>
            <person name="Hinton J."/>
            <person name="Jenkinson A."/>
            <person name="Jones D."/>
            <person name="Menzies A."/>
            <person name="Mironenko T."/>
            <person name="Perry J."/>
            <person name="Raine K."/>
            <person name="Richardson D."/>
            <person name="Shepherd R."/>
            <person name="Small A."/>
            <person name="Tofts C."/>
            <person name="Varian J."/>
            <person name="Webb T."/>
            <person name="West S."/>
            <person name="Widaa S."/>
            <person name="Yates A."/>
            <person name="Cahill D.P."/>
            <person name="Louis D.N."/>
            <person name="Goldstraw P."/>
            <person name="Nicholson A.G."/>
            <person name="Brasseur F."/>
            <person name="Looijenga L."/>
            <person name="Weber B.L."/>
            <person name="Chiew Y.-E."/>
            <person name="DeFazio A."/>
            <person name="Greaves M.F."/>
            <person name="Green A.R."/>
            <person name="Campbell P."/>
            <person name="Birney E."/>
            <person name="Easton D.F."/>
            <person name="Chenevix-Trench G."/>
            <person name="Tan M.-H."/>
            <person name="Khoo S.K."/>
            <person name="Teh B.T."/>
            <person name="Yuen S.T."/>
            <person name="Leung S.Y."/>
            <person name="Wooster R."/>
            <person name="Futreal P.A."/>
            <person name="Stratton M.R."/>
        </authorList>
    </citation>
    <scope>VARIANTS [LARGE SCALE ANALYSIS] ARG-173; MET-215; ILE-267; CYS-298; ALA-360; ASP-360 AND LEU-371</scope>
</reference>
<proteinExistence type="evidence at protein level"/>
<organism>
    <name type="scientific">Homo sapiens</name>
    <name type="common">Human</name>
    <dbReference type="NCBI Taxonomy" id="9606"/>
    <lineage>
        <taxon>Eukaryota</taxon>
        <taxon>Metazoa</taxon>
        <taxon>Chordata</taxon>
        <taxon>Craniata</taxon>
        <taxon>Vertebrata</taxon>
        <taxon>Euteleostomi</taxon>
        <taxon>Mammalia</taxon>
        <taxon>Eutheria</taxon>
        <taxon>Euarchontoglires</taxon>
        <taxon>Primates</taxon>
        <taxon>Haplorrhini</taxon>
        <taxon>Catarrhini</taxon>
        <taxon>Hominidae</taxon>
        <taxon>Homo</taxon>
    </lineage>
</organism>
<accession>Q96RU8</accession>
<accession>B4DMM6</accession>
<accession>C5HU08</accession>
<accession>O15180</accession>
<accession>Q9H2Y8</accession>
<name>TRIB1_HUMAN</name>
<sequence length="372" mass="41009">MRVGPVRSAMSGASQPRGPALLFPATRGVPAKRLLDADDAAAVAAKCPRLSECSSPPDYLSPPGSPCSPQPPPAAPGAGGGSGSAPGPSRIADYLLLPLAEREHVSRALCIHTGRELRCKVFPIKHYQDKIRPYIQLPSHSNITGIVEVILGETKAYVFFEKDFGDMHSYVRSRKRLREEEAARLFKQIVSAVAHCHQSAIVLGDLKLRKFVFSTEERTQLRLESLEDTHIMKGEDDALSDKHGCPAYVSPEILNTTGTYSGKAADVWSLGVMLYTLLVGRYPFHDSDPSALFSKIRRGQFCIPEHISPKARCLIRSLLRREPSERLTAPEILLHPWFESVLEPGYIDSEIGTSDQIVPEYQEDSDISSFFC</sequence>
<protein>
    <recommendedName>
        <fullName>Tribbles homolog 1</fullName>
        <shortName>TRB-1</shortName>
    </recommendedName>
    <alternativeName>
        <fullName>G-protein-coupled receptor-induced gene 2 protein</fullName>
        <shortName>GIG-2</shortName>
    </alternativeName>
    <alternativeName>
        <fullName>SKIP1</fullName>
    </alternativeName>
</protein>
<gene>
    <name evidence="16" type="primary">TRIB1</name>
    <name evidence="15" type="synonym">C8FW</name>
    <name evidence="12" type="synonym">GIG2</name>
    <name type="synonym">TRB1</name>
</gene>
<evidence type="ECO:0000250" key="1">
    <source>
        <dbReference type="UniProtKB" id="Q8K4K4"/>
    </source>
</evidence>
<evidence type="ECO:0000255" key="2">
    <source>
        <dbReference type="PROSITE-ProRule" id="PRU00159"/>
    </source>
</evidence>
<evidence type="ECO:0000256" key="3">
    <source>
        <dbReference type="SAM" id="MobiDB-lite"/>
    </source>
</evidence>
<evidence type="ECO:0000269" key="4">
    <source>
    </source>
</evidence>
<evidence type="ECO:0000269" key="5">
    <source>
    </source>
</evidence>
<evidence type="ECO:0000269" key="6">
    <source>
    </source>
</evidence>
<evidence type="ECO:0000269" key="7">
    <source>
    </source>
</evidence>
<evidence type="ECO:0000269" key="8">
    <source>
    </source>
</evidence>
<evidence type="ECO:0000303" key="9">
    <source>
    </source>
</evidence>
<evidence type="ECO:0000305" key="10"/>
<evidence type="ECO:0000305" key="11">
    <source>
    </source>
</evidence>
<evidence type="ECO:0000312" key="12">
    <source>
        <dbReference type="EMBL" id="AAG35663.1"/>
    </source>
</evidence>
<evidence type="ECO:0000312" key="13">
    <source>
        <dbReference type="EMBL" id="AAH63292.1"/>
    </source>
</evidence>
<evidence type="ECO:0000312" key="14">
    <source>
        <dbReference type="EMBL" id="AAK58174.1"/>
    </source>
</evidence>
<evidence type="ECO:0000312" key="15">
    <source>
        <dbReference type="EMBL" id="CAA04119.1"/>
    </source>
</evidence>
<evidence type="ECO:0000312" key="16">
    <source>
        <dbReference type="HGNC" id="HGNC:16891"/>
    </source>
</evidence>
<evidence type="ECO:0007744" key="17">
    <source>
        <dbReference type="PDB" id="5CEK"/>
    </source>
</evidence>
<evidence type="ECO:0007744" key="18">
    <source>
        <dbReference type="PDB" id="5CEM"/>
    </source>
</evidence>
<evidence type="ECO:0007744" key="19">
    <source>
        <dbReference type="PDB" id="5IGO"/>
    </source>
</evidence>
<evidence type="ECO:0007744" key="20">
    <source>
        <dbReference type="PDB" id="5IGQ"/>
    </source>
</evidence>
<evidence type="ECO:0007829" key="21">
    <source>
        <dbReference type="PDB" id="5CEK"/>
    </source>
</evidence>
<evidence type="ECO:0007829" key="22">
    <source>
        <dbReference type="PDB" id="5CEM"/>
    </source>
</evidence>
<evidence type="ECO:0007829" key="23">
    <source>
        <dbReference type="PDB" id="6DC0"/>
    </source>
</evidence>